<gene>
    <name evidence="9" type="primary">Atg12</name>
    <name type="synonym">Apg12l</name>
</gene>
<accession>Q2TBJ5</accession>
<accession>Q5M9F9</accession>
<organism>
    <name type="scientific">Rattus norvegicus</name>
    <name type="common">Rat</name>
    <dbReference type="NCBI Taxonomy" id="10116"/>
    <lineage>
        <taxon>Eukaryota</taxon>
        <taxon>Metazoa</taxon>
        <taxon>Chordata</taxon>
        <taxon>Craniata</taxon>
        <taxon>Vertebrata</taxon>
        <taxon>Euteleostomi</taxon>
        <taxon>Mammalia</taxon>
        <taxon>Eutheria</taxon>
        <taxon>Euarchontoglires</taxon>
        <taxon>Glires</taxon>
        <taxon>Rodentia</taxon>
        <taxon>Myomorpha</taxon>
        <taxon>Muroidea</taxon>
        <taxon>Muridae</taxon>
        <taxon>Murinae</taxon>
        <taxon>Rattus</taxon>
    </lineage>
</organism>
<evidence type="ECO:0000250" key="1"/>
<evidence type="ECO:0000250" key="2">
    <source>
        <dbReference type="UniProtKB" id="O94817"/>
    </source>
</evidence>
<evidence type="ECO:0000250" key="3">
    <source>
        <dbReference type="UniProtKB" id="Q9CQY1"/>
    </source>
</evidence>
<evidence type="ECO:0000256" key="4">
    <source>
        <dbReference type="SAM" id="MobiDB-lite"/>
    </source>
</evidence>
<evidence type="ECO:0000269" key="5">
    <source>
    </source>
</evidence>
<evidence type="ECO:0000269" key="6">
    <source>
    </source>
</evidence>
<evidence type="ECO:0000269" key="7">
    <source>
    </source>
</evidence>
<evidence type="ECO:0000305" key="8"/>
<evidence type="ECO:0000312" key="9">
    <source>
        <dbReference type="RGD" id="1306306"/>
    </source>
</evidence>
<sequence>MAEDPEAVLQLPAAPAAAAGESLLELSPETAIPEPPSSVAVSPGTEEPPGDTKKKIDILLKAVGDTPIMKTKKWAVERTRTVQALIDFIRKFLRLLASEQLFIYVNQSFAPSPDQEVGTLYECFGSDGKLVLHYCKSQAWG</sequence>
<feature type="chain" id="PRO_0000233273" description="Ubiquitin-like protein ATG12">
    <location>
        <begin position="1"/>
        <end position="141"/>
    </location>
</feature>
<feature type="region of interest" description="Disordered" evidence="4">
    <location>
        <begin position="24"/>
        <end position="54"/>
    </location>
</feature>
<feature type="cross-link" description="Glycyl lysine isopeptide (Gly-Lys) (interchain with K-? in acceptor protein)" evidence="1">
    <location>
        <position position="141"/>
    </location>
</feature>
<dbReference type="EMBL" id="BC087139">
    <property type="protein sequence ID" value="AAH87139.1"/>
    <property type="molecule type" value="mRNA"/>
</dbReference>
<dbReference type="EMBL" id="BC110056">
    <property type="protein sequence ID" value="AAI10057.1"/>
    <property type="molecule type" value="mRNA"/>
</dbReference>
<dbReference type="RefSeq" id="NP_001033584.1">
    <property type="nucleotide sequence ID" value="NM_001038495.1"/>
</dbReference>
<dbReference type="SMR" id="Q2TBJ5"/>
<dbReference type="BioGRID" id="262598">
    <property type="interactions" value="1"/>
</dbReference>
<dbReference type="FunCoup" id="Q2TBJ5">
    <property type="interactions" value="3360"/>
</dbReference>
<dbReference type="STRING" id="10116.ENSRNOP00000000170"/>
<dbReference type="PhosphoSitePlus" id="Q2TBJ5"/>
<dbReference type="jPOST" id="Q2TBJ5"/>
<dbReference type="PaxDb" id="10116-ENSRNOP00000000170"/>
<dbReference type="Ensembl" id="ENSRNOT00000000170.6">
    <property type="protein sequence ID" value="ENSRNOP00000000170.4"/>
    <property type="gene ID" value="ENSRNOG00000000157.6"/>
</dbReference>
<dbReference type="GeneID" id="361321"/>
<dbReference type="KEGG" id="rno:361321"/>
<dbReference type="UCSC" id="RGD:1306306">
    <property type="organism name" value="rat"/>
</dbReference>
<dbReference type="AGR" id="RGD:1306306"/>
<dbReference type="CTD" id="9140"/>
<dbReference type="RGD" id="1306306">
    <property type="gene designation" value="Atg12"/>
</dbReference>
<dbReference type="eggNOG" id="KOG3439">
    <property type="taxonomic scope" value="Eukaryota"/>
</dbReference>
<dbReference type="GeneTree" id="ENSGT00390000016654"/>
<dbReference type="HOGENOM" id="CLU_106795_3_0_1"/>
<dbReference type="InParanoid" id="Q2TBJ5"/>
<dbReference type="OMA" id="YAKTHAW"/>
<dbReference type="OrthoDB" id="57923at9989"/>
<dbReference type="PhylomeDB" id="Q2TBJ5"/>
<dbReference type="TreeFam" id="TF325131"/>
<dbReference type="Reactome" id="R-RNO-1632852">
    <property type="pathway name" value="Macroautophagy"/>
</dbReference>
<dbReference type="Reactome" id="R-RNO-5205685">
    <property type="pathway name" value="PINK1-PRKN Mediated Mitophagy"/>
</dbReference>
<dbReference type="Reactome" id="R-RNO-8934903">
    <property type="pathway name" value="Receptor Mediated Mitophagy"/>
</dbReference>
<dbReference type="PRO" id="PR:Q2TBJ5"/>
<dbReference type="Proteomes" id="UP000002494">
    <property type="component" value="Chromosome 18"/>
</dbReference>
<dbReference type="Bgee" id="ENSRNOG00000000157">
    <property type="expression patterns" value="Expressed in thymus and 20 other cell types or tissues"/>
</dbReference>
<dbReference type="GO" id="GO:0034274">
    <property type="term" value="C:Atg12-Atg5-Atg16 complex"/>
    <property type="evidence" value="ECO:0000266"/>
    <property type="project" value="RGD"/>
</dbReference>
<dbReference type="GO" id="GO:0005776">
    <property type="term" value="C:autophagosome"/>
    <property type="evidence" value="ECO:0000266"/>
    <property type="project" value="RGD"/>
</dbReference>
<dbReference type="GO" id="GO:0000421">
    <property type="term" value="C:autophagosome membrane"/>
    <property type="evidence" value="ECO:0000318"/>
    <property type="project" value="GO_Central"/>
</dbReference>
<dbReference type="GO" id="GO:0016020">
    <property type="term" value="C:membrane"/>
    <property type="evidence" value="ECO:0000266"/>
    <property type="project" value="RGD"/>
</dbReference>
<dbReference type="GO" id="GO:0034045">
    <property type="term" value="C:phagophore assembly site membrane"/>
    <property type="evidence" value="ECO:0000266"/>
    <property type="project" value="RGD"/>
</dbReference>
<dbReference type="GO" id="GO:0032991">
    <property type="term" value="C:protein-containing complex"/>
    <property type="evidence" value="ECO:0000314"/>
    <property type="project" value="RGD"/>
</dbReference>
<dbReference type="GO" id="GO:1990234">
    <property type="term" value="C:transferase complex"/>
    <property type="evidence" value="ECO:0000266"/>
    <property type="project" value="RGD"/>
</dbReference>
<dbReference type="GO" id="GO:0031386">
    <property type="term" value="F:protein tag activity"/>
    <property type="evidence" value="ECO:0000318"/>
    <property type="project" value="GO_Central"/>
</dbReference>
<dbReference type="GO" id="GO:0000045">
    <property type="term" value="P:autophagosome assembly"/>
    <property type="evidence" value="ECO:0000266"/>
    <property type="project" value="RGD"/>
</dbReference>
<dbReference type="GO" id="GO:0097352">
    <property type="term" value="P:autophagosome maturation"/>
    <property type="evidence" value="ECO:0000318"/>
    <property type="project" value="GO_Central"/>
</dbReference>
<dbReference type="GO" id="GO:0006914">
    <property type="term" value="P:autophagy"/>
    <property type="evidence" value="ECO:0000315"/>
    <property type="project" value="RGD"/>
</dbReference>
<dbReference type="GO" id="GO:0000422">
    <property type="term" value="P:autophagy of mitochondrion"/>
    <property type="evidence" value="ECO:0000318"/>
    <property type="project" value="GO_Central"/>
</dbReference>
<dbReference type="GO" id="GO:0061723">
    <property type="term" value="P:glycophagy"/>
    <property type="evidence" value="ECO:0000318"/>
    <property type="project" value="GO_Central"/>
</dbReference>
<dbReference type="GO" id="GO:0045087">
    <property type="term" value="P:innate immune response"/>
    <property type="evidence" value="ECO:0007669"/>
    <property type="project" value="UniProtKB-KW"/>
</dbReference>
<dbReference type="GO" id="GO:0016236">
    <property type="term" value="P:macroautophagy"/>
    <property type="evidence" value="ECO:0000266"/>
    <property type="project" value="RGD"/>
</dbReference>
<dbReference type="GO" id="GO:0050687">
    <property type="term" value="P:negative regulation of defense response to virus"/>
    <property type="evidence" value="ECO:0000266"/>
    <property type="project" value="RGD"/>
</dbReference>
<dbReference type="GO" id="GO:0045824">
    <property type="term" value="P:negative regulation of innate immune response"/>
    <property type="evidence" value="ECO:0000266"/>
    <property type="project" value="RGD"/>
</dbReference>
<dbReference type="GO" id="GO:0032480">
    <property type="term" value="P:negative regulation of type I interferon production"/>
    <property type="evidence" value="ECO:0000266"/>
    <property type="project" value="RGD"/>
</dbReference>
<dbReference type="GO" id="GO:0034727">
    <property type="term" value="P:piecemeal microautophagy of the nucleus"/>
    <property type="evidence" value="ECO:0000318"/>
    <property type="project" value="GO_Central"/>
</dbReference>
<dbReference type="GO" id="GO:1904973">
    <property type="term" value="P:positive regulation of viral translation"/>
    <property type="evidence" value="ECO:0000266"/>
    <property type="project" value="RGD"/>
</dbReference>
<dbReference type="GO" id="GO:1901096">
    <property type="term" value="P:regulation of autophagosome maturation"/>
    <property type="evidence" value="ECO:0000266"/>
    <property type="project" value="RGD"/>
</dbReference>
<dbReference type="CDD" id="cd01612">
    <property type="entry name" value="Ubl_ATG12"/>
    <property type="match status" value="1"/>
</dbReference>
<dbReference type="FunFam" id="3.10.20.90:FF:000117">
    <property type="entry name" value="Ubiquitin-like protein ATG12"/>
    <property type="match status" value="1"/>
</dbReference>
<dbReference type="Gene3D" id="3.10.20.90">
    <property type="entry name" value="Phosphatidylinositol 3-kinase Catalytic Subunit, Chain A, domain 1"/>
    <property type="match status" value="1"/>
</dbReference>
<dbReference type="InterPro" id="IPR007242">
    <property type="entry name" value="Atg12"/>
</dbReference>
<dbReference type="InterPro" id="IPR029071">
    <property type="entry name" value="Ubiquitin-like_domsf"/>
</dbReference>
<dbReference type="PANTHER" id="PTHR13385">
    <property type="entry name" value="AUTOPHAGY PROTEIN 12"/>
    <property type="match status" value="1"/>
</dbReference>
<dbReference type="PANTHER" id="PTHR13385:SF0">
    <property type="entry name" value="UBIQUITIN-LIKE PROTEIN ATG12"/>
    <property type="match status" value="1"/>
</dbReference>
<dbReference type="Pfam" id="PF04110">
    <property type="entry name" value="APG12"/>
    <property type="match status" value="1"/>
</dbReference>
<dbReference type="SUPFAM" id="SSF54236">
    <property type="entry name" value="Ubiquitin-like"/>
    <property type="match status" value="1"/>
</dbReference>
<proteinExistence type="evidence at transcript level"/>
<protein>
    <recommendedName>
        <fullName evidence="8">Ubiquitin-like protein ATG12</fullName>
    </recommendedName>
    <alternativeName>
        <fullName>Autophagy-related protein 12</fullName>
        <shortName>APG12-like</shortName>
    </alternativeName>
</protein>
<name>ATG12_RAT</name>
<comment type="function">
    <text evidence="1 3">Ubiquitin-like protein involved in autophagy vesicles formation. Conjugation with ATG5 through a ubiquitin-like conjugating system involving also ATG7 as an E1-like activating enzyme and ATG10 as an E2-like conjugating enzyme, is essential for its function. The ATG12-ATG5 conjugate acts as an E3-like enzyme which is required for lipidation of ATG8 family proteins and their association to the vesicle membranes. The ATG12-ATG5 conjugate also negatively regulates the innate antiviral immune response by blocking the type I IFN production pathway through direct association with RARRES3 and MAVS. Also plays a role in translation or delivery of incoming viral RNA to the translation apparatus (By similarity). As part of the ATG8 conjugation system with ATG5 and ATG16L1, required for recruitment of LRRK2 to stressed lysosomes and induction of LRRK2 kinase activity in response to lysosomal stress (By similarity).</text>
</comment>
<comment type="subunit">
    <text evidence="2 3">Forms a conjugate with ATG5. Part of the minor complex composed of 4 sets of ATG12-ATG5 and ATG16L1 (400 kDa); this complex interacts with ATG3 leading to disruption of ATG7 interaction and promotion of ATG8-like proteins lipidation (By similarity). Forms an 800-kDa complex composed of ATG12-ATG5 and ATG16L2 (By similarity). Interacts with DHX58/RIG-1, IFIH1/MDA5 and MAVS/IPS-1 in monomeric form as well as in ATG12-ATG5 conjugate. The interaction with MAVS is further enhanced upon vesicular stomatitis virus (VSV) infection. Interacts with ATG3; this interaction is essential for phosphatidylethanolamine (PE)-conjugated ATG8-like proteins formation (By similarity). Interacts with ATG7 (By similarity). Interacts with ATG10 (By similarity). The ATG12-ATG5 conjugate interacts with RAB33A; this interaction is bridged by ATG16L1 and promotes ATG12-ATG5-ATG16L1 complex recruitment to phagophores (By similarity). Interacts with TECPR1. Interacts with SH3BGRL (By similarity). The ATG12-ATG5 conjugate interacts with PDCD6IP (via the BRO1 domain); this interaction is bridged by ATG12 and promotes multiple PDCD6IP-mediated functions such as endolysosomal trafficking, macroautophagy and exosome biogenesis (By similarity).</text>
</comment>
<comment type="subcellular location">
    <subcellularLocation>
        <location evidence="1">Cytoplasm</location>
    </subcellularLocation>
    <subcellularLocation>
        <location evidence="1">Preautophagosomal structure membrane</location>
        <topology evidence="1">Peripheral membrane protein</topology>
    </subcellularLocation>
    <text evidence="1">TECPR1 recruits the ATG12-ATG5 conjugate to the autolysosomal membrane.</text>
</comment>
<comment type="induction">
    <text evidence="5 6 7">Activated in retinal ganglion cells (RGCs) following optic nerve transection (PubMed:18521932). Induced under starvation conditions, through the action of the Foxo1 and Foxo3 transcription factors (PubMed:19696026, PubMed:24187137).</text>
</comment>
<comment type="domain">
    <text evidence="1">Shares weak sequence similarity with ubiquitin family, but contains an 'ubiquitin superfold' and the C-terminal Gly is required for isopeptide linkage.</text>
</comment>
<comment type="PTM">
    <text evidence="1">Acetylated by EP300.</text>
</comment>
<comment type="similarity">
    <text evidence="8">Belongs to the ATG12 family.</text>
</comment>
<keyword id="KW-0007">Acetylation</keyword>
<keyword id="KW-0072">Autophagy</keyword>
<keyword id="KW-0963">Cytoplasm</keyword>
<keyword id="KW-0391">Immunity</keyword>
<keyword id="KW-0399">Innate immunity</keyword>
<keyword id="KW-1017">Isopeptide bond</keyword>
<keyword id="KW-0472">Membrane</keyword>
<keyword id="KW-1185">Reference proteome</keyword>
<keyword id="KW-0833">Ubl conjugation pathway</keyword>
<reference key="1">
    <citation type="journal article" date="2004" name="Genome Res.">
        <title>The status, quality, and expansion of the NIH full-length cDNA project: the Mammalian Gene Collection (MGC).</title>
        <authorList>
            <consortium name="The MGC Project Team"/>
        </authorList>
    </citation>
    <scope>NUCLEOTIDE SEQUENCE [LARGE SCALE MRNA]</scope>
    <source>
        <tissue>Kidney</tissue>
        <tissue>Placenta</tissue>
    </source>
</reference>
<reference key="2">
    <citation type="journal article" date="2008" name="J. Neurosci. Res.">
        <title>Activation of autophagy in retinal ganglion cells.</title>
        <authorList>
            <person name="Kim S.H."/>
            <person name="Munemasa Y."/>
            <person name="Kwong J.M."/>
            <person name="Ahn J.H."/>
            <person name="Mareninov S."/>
            <person name="Gordon L.K."/>
            <person name="Caprioli J."/>
            <person name="Piri N."/>
        </authorList>
    </citation>
    <scope>INDUCTION BY OPTIC NERVE TRANSECTION</scope>
</reference>
<reference key="3">
    <citation type="journal article" date="2009" name="J. Biol. Chem.">
        <title>FoxO transcription factors promote autophagy in cardiomyocytes.</title>
        <authorList>
            <person name="Sengupta A."/>
            <person name="Molkentin J.D."/>
            <person name="Yutzey K.E."/>
        </authorList>
    </citation>
    <scope>INDUCTION BY STARVATION</scope>
</reference>
<reference key="4">
    <citation type="journal article" date="2013" name="J. Biol. Chem.">
        <title>Skeletal muscle-derived myonectin activates the mammalian target of rapamycin (mTOR) pathway to suppress autophagy in liver.</title>
        <authorList>
            <person name="Seldin M.M."/>
            <person name="Lei X."/>
            <person name="Tan S.Y."/>
            <person name="Stanson K.P."/>
            <person name="Wei Z."/>
            <person name="Wong G.W."/>
        </authorList>
    </citation>
    <scope>INDUCTION BY STARVATION</scope>
</reference>